<sequence length="222" mass="25933">MEHDGSLGRMLRFCEWIMRFAYTNLLWLFFTLLGLGVFGIMPATAALFAVMRKWIQGQDNVPVLKTFWQEYKGEFFRSNLLGAVLALIGVIIYIDLALIYPSHFLLHILRFAIMIFGFLFVSMLFYVFPLLVHFDWKKRLYVKFSLLLSVAYLQYTLTMLALTVALFFLLAYLPGIVPFFSVSLISYCHMRIVYAVLLKVEQHGGEPQRKSHIRKAFYPETR</sequence>
<comment type="subcellular location">
    <subcellularLocation>
        <location evidence="2">Cell membrane</location>
        <topology evidence="2">Multi-pass membrane protein</topology>
    </subcellularLocation>
</comment>
<reference key="1">
    <citation type="journal article" date="1997" name="Microbiology">
        <title>Sequencing and functional annotation of the Bacillus subtilis genes in the 200 kb rrnB-dnaB region.</title>
        <authorList>
            <person name="Lapidus A."/>
            <person name="Galleron N."/>
            <person name="Sorokin A."/>
            <person name="Ehrlich S.D."/>
        </authorList>
    </citation>
    <scope>NUCLEOTIDE SEQUENCE [GENOMIC DNA]</scope>
    <source>
        <strain>168</strain>
    </source>
</reference>
<reference key="2">
    <citation type="journal article" date="1997" name="Nature">
        <title>The complete genome sequence of the Gram-positive bacterium Bacillus subtilis.</title>
        <authorList>
            <person name="Kunst F."/>
            <person name="Ogasawara N."/>
            <person name="Moszer I."/>
            <person name="Albertini A.M."/>
            <person name="Alloni G."/>
            <person name="Azevedo V."/>
            <person name="Bertero M.G."/>
            <person name="Bessieres P."/>
            <person name="Bolotin A."/>
            <person name="Borchert S."/>
            <person name="Borriss R."/>
            <person name="Boursier L."/>
            <person name="Brans A."/>
            <person name="Braun M."/>
            <person name="Brignell S.C."/>
            <person name="Bron S."/>
            <person name="Brouillet S."/>
            <person name="Bruschi C.V."/>
            <person name="Caldwell B."/>
            <person name="Capuano V."/>
            <person name="Carter N.M."/>
            <person name="Choi S.-K."/>
            <person name="Codani J.-J."/>
            <person name="Connerton I.F."/>
            <person name="Cummings N.J."/>
            <person name="Daniel R.A."/>
            <person name="Denizot F."/>
            <person name="Devine K.M."/>
            <person name="Duesterhoeft A."/>
            <person name="Ehrlich S.D."/>
            <person name="Emmerson P.T."/>
            <person name="Entian K.-D."/>
            <person name="Errington J."/>
            <person name="Fabret C."/>
            <person name="Ferrari E."/>
            <person name="Foulger D."/>
            <person name="Fritz C."/>
            <person name="Fujita M."/>
            <person name="Fujita Y."/>
            <person name="Fuma S."/>
            <person name="Galizzi A."/>
            <person name="Galleron N."/>
            <person name="Ghim S.-Y."/>
            <person name="Glaser P."/>
            <person name="Goffeau A."/>
            <person name="Golightly E.J."/>
            <person name="Grandi G."/>
            <person name="Guiseppi G."/>
            <person name="Guy B.J."/>
            <person name="Haga K."/>
            <person name="Haiech J."/>
            <person name="Harwood C.R."/>
            <person name="Henaut A."/>
            <person name="Hilbert H."/>
            <person name="Holsappel S."/>
            <person name="Hosono S."/>
            <person name="Hullo M.-F."/>
            <person name="Itaya M."/>
            <person name="Jones L.-M."/>
            <person name="Joris B."/>
            <person name="Karamata D."/>
            <person name="Kasahara Y."/>
            <person name="Klaerr-Blanchard M."/>
            <person name="Klein C."/>
            <person name="Kobayashi Y."/>
            <person name="Koetter P."/>
            <person name="Koningstein G."/>
            <person name="Krogh S."/>
            <person name="Kumano M."/>
            <person name="Kurita K."/>
            <person name="Lapidus A."/>
            <person name="Lardinois S."/>
            <person name="Lauber J."/>
            <person name="Lazarevic V."/>
            <person name="Lee S.-M."/>
            <person name="Levine A."/>
            <person name="Liu H."/>
            <person name="Masuda S."/>
            <person name="Mauel C."/>
            <person name="Medigue C."/>
            <person name="Medina N."/>
            <person name="Mellado R.P."/>
            <person name="Mizuno M."/>
            <person name="Moestl D."/>
            <person name="Nakai S."/>
            <person name="Noback M."/>
            <person name="Noone D."/>
            <person name="O'Reilly M."/>
            <person name="Ogawa K."/>
            <person name="Ogiwara A."/>
            <person name="Oudega B."/>
            <person name="Park S.-H."/>
            <person name="Parro V."/>
            <person name="Pohl T.M."/>
            <person name="Portetelle D."/>
            <person name="Porwollik S."/>
            <person name="Prescott A.M."/>
            <person name="Presecan E."/>
            <person name="Pujic P."/>
            <person name="Purnelle B."/>
            <person name="Rapoport G."/>
            <person name="Rey M."/>
            <person name="Reynolds S."/>
            <person name="Rieger M."/>
            <person name="Rivolta C."/>
            <person name="Rocha E."/>
            <person name="Roche B."/>
            <person name="Rose M."/>
            <person name="Sadaie Y."/>
            <person name="Sato T."/>
            <person name="Scanlan E."/>
            <person name="Schleich S."/>
            <person name="Schroeter R."/>
            <person name="Scoffone F."/>
            <person name="Sekiguchi J."/>
            <person name="Sekowska A."/>
            <person name="Seror S.J."/>
            <person name="Serror P."/>
            <person name="Shin B.-S."/>
            <person name="Soldo B."/>
            <person name="Sorokin A."/>
            <person name="Tacconi E."/>
            <person name="Takagi T."/>
            <person name="Takahashi H."/>
            <person name="Takemaru K."/>
            <person name="Takeuchi M."/>
            <person name="Tamakoshi A."/>
            <person name="Tanaka T."/>
            <person name="Terpstra P."/>
            <person name="Tognoni A."/>
            <person name="Tosato V."/>
            <person name="Uchiyama S."/>
            <person name="Vandenbol M."/>
            <person name="Vannier F."/>
            <person name="Vassarotti A."/>
            <person name="Viari A."/>
            <person name="Wambutt R."/>
            <person name="Wedler E."/>
            <person name="Wedler H."/>
            <person name="Weitzenegger T."/>
            <person name="Winters P."/>
            <person name="Wipat A."/>
            <person name="Yamamoto H."/>
            <person name="Yamane K."/>
            <person name="Yasumoto K."/>
            <person name="Yata K."/>
            <person name="Yoshida K."/>
            <person name="Yoshikawa H.-F."/>
            <person name="Zumstein E."/>
            <person name="Yoshikawa H."/>
            <person name="Danchin A."/>
        </authorList>
    </citation>
    <scope>NUCLEOTIDE SEQUENCE [LARGE SCALE GENOMIC DNA]</scope>
    <source>
        <strain>168</strain>
    </source>
</reference>
<feature type="chain" id="PRO_0000387988" description="Uncharacterized protein YteU">
    <location>
        <begin position="1"/>
        <end position="222"/>
    </location>
</feature>
<feature type="transmembrane region" description="Helical" evidence="1">
    <location>
        <begin position="25"/>
        <end position="45"/>
    </location>
</feature>
<feature type="transmembrane region" description="Helical" evidence="1">
    <location>
        <begin position="80"/>
        <end position="100"/>
    </location>
</feature>
<feature type="transmembrane region" description="Helical" evidence="1">
    <location>
        <begin position="111"/>
        <end position="131"/>
    </location>
</feature>
<feature type="transmembrane region" description="Helical" evidence="1">
    <location>
        <begin position="160"/>
        <end position="180"/>
    </location>
</feature>
<accession>O34378</accession>
<accession>Q795R7</accession>
<evidence type="ECO:0000255" key="1"/>
<evidence type="ECO:0000305" key="2"/>
<gene>
    <name type="primary">yteU</name>
    <name type="ordered locus">BSU30090</name>
</gene>
<keyword id="KW-1003">Cell membrane</keyword>
<keyword id="KW-0472">Membrane</keyword>
<keyword id="KW-1185">Reference proteome</keyword>
<keyword id="KW-0812">Transmembrane</keyword>
<keyword id="KW-1133">Transmembrane helix</keyword>
<protein>
    <recommendedName>
        <fullName>Uncharacterized protein YteU</fullName>
    </recommendedName>
</protein>
<dbReference type="EMBL" id="AF008220">
    <property type="protein sequence ID" value="AAC00275.1"/>
    <property type="molecule type" value="Genomic_DNA"/>
</dbReference>
<dbReference type="EMBL" id="AL009126">
    <property type="protein sequence ID" value="CAB14987.1"/>
    <property type="molecule type" value="Genomic_DNA"/>
</dbReference>
<dbReference type="PIR" id="D69991">
    <property type="entry name" value="D69991"/>
</dbReference>
<dbReference type="RefSeq" id="WP_003229218.1">
    <property type="nucleotide sequence ID" value="NZ_OZ025638.1"/>
</dbReference>
<dbReference type="FunCoup" id="O34378">
    <property type="interactions" value="31"/>
</dbReference>
<dbReference type="STRING" id="224308.BSU30090"/>
<dbReference type="PaxDb" id="224308-BSU30090"/>
<dbReference type="EnsemblBacteria" id="CAB14987">
    <property type="protein sequence ID" value="CAB14987"/>
    <property type="gene ID" value="BSU_30090"/>
</dbReference>
<dbReference type="GeneID" id="936405"/>
<dbReference type="KEGG" id="bsu:BSU30090"/>
<dbReference type="PATRIC" id="fig|224308.179.peg.3266"/>
<dbReference type="eggNOG" id="COG5578">
    <property type="taxonomic scope" value="Bacteria"/>
</dbReference>
<dbReference type="InParanoid" id="O34378"/>
<dbReference type="OrthoDB" id="2182676at2"/>
<dbReference type="PhylomeDB" id="O34378"/>
<dbReference type="BioCyc" id="BSUB:BSU30090-MONOMER"/>
<dbReference type="Proteomes" id="UP000001570">
    <property type="component" value="Chromosome"/>
</dbReference>
<dbReference type="GO" id="GO:0005886">
    <property type="term" value="C:plasma membrane"/>
    <property type="evidence" value="ECO:0007669"/>
    <property type="project" value="UniProtKB-SubCell"/>
</dbReference>
<dbReference type="InterPro" id="IPR006938">
    <property type="entry name" value="DUF624"/>
</dbReference>
<dbReference type="Pfam" id="PF04854">
    <property type="entry name" value="DUF624"/>
    <property type="match status" value="1"/>
</dbReference>
<organism>
    <name type="scientific">Bacillus subtilis (strain 168)</name>
    <dbReference type="NCBI Taxonomy" id="224308"/>
    <lineage>
        <taxon>Bacteria</taxon>
        <taxon>Bacillati</taxon>
        <taxon>Bacillota</taxon>
        <taxon>Bacilli</taxon>
        <taxon>Bacillales</taxon>
        <taxon>Bacillaceae</taxon>
        <taxon>Bacillus</taxon>
    </lineage>
</organism>
<name>YTEU_BACSU</name>
<proteinExistence type="predicted"/>